<organism>
    <name type="scientific">Schizosaccharomyces pombe (strain 972 / ATCC 24843)</name>
    <name type="common">Fission yeast</name>
    <dbReference type="NCBI Taxonomy" id="284812"/>
    <lineage>
        <taxon>Eukaryota</taxon>
        <taxon>Fungi</taxon>
        <taxon>Dikarya</taxon>
        <taxon>Ascomycota</taxon>
        <taxon>Taphrinomycotina</taxon>
        <taxon>Schizosaccharomycetes</taxon>
        <taxon>Schizosaccharomycetales</taxon>
        <taxon>Schizosaccharomycetaceae</taxon>
        <taxon>Schizosaccharomyces</taxon>
    </lineage>
</organism>
<keyword id="KW-0256">Endoplasmic reticulum</keyword>
<keyword id="KW-0349">Heme</keyword>
<keyword id="KW-0408">Iron</keyword>
<keyword id="KW-0444">Lipid biosynthesis</keyword>
<keyword id="KW-0443">Lipid metabolism</keyword>
<keyword id="KW-0472">Membrane</keyword>
<keyword id="KW-0479">Metal-binding</keyword>
<keyword id="KW-0503">Monooxygenase</keyword>
<keyword id="KW-0560">Oxidoreductase</keyword>
<keyword id="KW-1185">Reference proteome</keyword>
<keyword id="KW-0752">Steroid biosynthesis</keyword>
<keyword id="KW-0753">Steroid metabolism</keyword>
<keyword id="KW-0756">Sterol biosynthesis</keyword>
<keyword id="KW-1207">Sterol metabolism</keyword>
<keyword id="KW-0346">Stress response</keyword>
<keyword id="KW-0812">Transmembrane</keyword>
<keyword id="KW-1133">Transmembrane helix</keyword>
<accession>Q09736</accession>
<protein>
    <recommendedName>
        <fullName evidence="12">Lanosterol 14-alpha demethylase erg11</fullName>
        <ecNumber evidence="15">1.14.14.154</ecNumber>
    </recommendedName>
    <alternativeName>
        <fullName evidence="13">Cytochrome P450 51</fullName>
    </alternativeName>
    <alternativeName>
        <fullName evidence="12">Ergosterol biosynthetic protein 11</fullName>
    </alternativeName>
    <alternativeName>
        <fullName evidence="13">Sterol 14-alpha demethylase</fullName>
    </alternativeName>
</protein>
<dbReference type="EC" id="1.14.14.154" evidence="15"/>
<dbReference type="EMBL" id="CU329670">
    <property type="protein sequence ID" value="CAA90803.1"/>
    <property type="molecule type" value="Genomic_DNA"/>
</dbReference>
<dbReference type="PIR" id="T37609">
    <property type="entry name" value="T37609"/>
</dbReference>
<dbReference type="RefSeq" id="NP_592990.1">
    <property type="nucleotide sequence ID" value="NM_001018389.2"/>
</dbReference>
<dbReference type="SMR" id="Q09736"/>
<dbReference type="BioGRID" id="279053">
    <property type="interactions" value="9"/>
</dbReference>
<dbReference type="FunCoup" id="Q09736">
    <property type="interactions" value="203"/>
</dbReference>
<dbReference type="STRING" id="284812.Q09736"/>
<dbReference type="iPTMnet" id="Q09736"/>
<dbReference type="PaxDb" id="4896-SPAC13A11.02c.1"/>
<dbReference type="EnsemblFungi" id="SPAC13A11.02c.1">
    <property type="protein sequence ID" value="SPAC13A11.02c.1:pep"/>
    <property type="gene ID" value="SPAC13A11.02c"/>
</dbReference>
<dbReference type="GeneID" id="2542599"/>
<dbReference type="KEGG" id="spo:2542599"/>
<dbReference type="PomBase" id="SPAC13A11.02c">
    <property type="gene designation" value="erg11"/>
</dbReference>
<dbReference type="VEuPathDB" id="FungiDB:SPAC13A11.02c"/>
<dbReference type="eggNOG" id="KOG0684">
    <property type="taxonomic scope" value="Eukaryota"/>
</dbReference>
<dbReference type="HOGENOM" id="CLU_001570_15_0_1"/>
<dbReference type="InParanoid" id="Q09736"/>
<dbReference type="OMA" id="HWFPFVG"/>
<dbReference type="PhylomeDB" id="Q09736"/>
<dbReference type="Reactome" id="R-SPO-191273">
    <property type="pathway name" value="Cholesterol biosynthesis"/>
</dbReference>
<dbReference type="Reactome" id="R-SPO-211976">
    <property type="pathway name" value="Endogenous sterols"/>
</dbReference>
<dbReference type="UniPathway" id="UPA00768"/>
<dbReference type="UniPathway" id="UPA00770">
    <property type="reaction ID" value="UER00754"/>
</dbReference>
<dbReference type="PRO" id="PR:Q09736"/>
<dbReference type="Proteomes" id="UP000002485">
    <property type="component" value="Chromosome I"/>
</dbReference>
<dbReference type="GO" id="GO:0032541">
    <property type="term" value="C:cortical endoplasmic reticulum"/>
    <property type="evidence" value="ECO:0000314"/>
    <property type="project" value="PomBase"/>
</dbReference>
<dbReference type="GO" id="GO:0005783">
    <property type="term" value="C:endoplasmic reticulum"/>
    <property type="evidence" value="ECO:0007005"/>
    <property type="project" value="PomBase"/>
</dbReference>
<dbReference type="GO" id="GO:0005789">
    <property type="term" value="C:endoplasmic reticulum membrane"/>
    <property type="evidence" value="ECO:0000250"/>
    <property type="project" value="PomBase"/>
</dbReference>
<dbReference type="GO" id="GO:0097038">
    <property type="term" value="C:perinuclear endoplasmic reticulum"/>
    <property type="evidence" value="ECO:0000314"/>
    <property type="project" value="PomBase"/>
</dbReference>
<dbReference type="GO" id="GO:0020037">
    <property type="term" value="F:heme binding"/>
    <property type="evidence" value="ECO:0000304"/>
    <property type="project" value="PomBase"/>
</dbReference>
<dbReference type="GO" id="GO:0005506">
    <property type="term" value="F:iron ion binding"/>
    <property type="evidence" value="ECO:0007669"/>
    <property type="project" value="InterPro"/>
</dbReference>
<dbReference type="GO" id="GO:0016491">
    <property type="term" value="F:oxidoreductase activity"/>
    <property type="evidence" value="ECO:0000318"/>
    <property type="project" value="GO_Central"/>
</dbReference>
<dbReference type="GO" id="GO:0008398">
    <property type="term" value="F:sterol 14-demethylase activity"/>
    <property type="evidence" value="ECO:0000250"/>
    <property type="project" value="PomBase"/>
</dbReference>
<dbReference type="GO" id="GO:0006696">
    <property type="term" value="P:ergosterol biosynthetic process"/>
    <property type="evidence" value="ECO:0000318"/>
    <property type="project" value="GO_Central"/>
</dbReference>
<dbReference type="CDD" id="cd11042">
    <property type="entry name" value="CYP51-like"/>
    <property type="match status" value="1"/>
</dbReference>
<dbReference type="FunFam" id="1.10.630.10:FF:000033">
    <property type="entry name" value="14-alpha sterol demethylase"/>
    <property type="match status" value="1"/>
</dbReference>
<dbReference type="Gene3D" id="1.10.630.10">
    <property type="entry name" value="Cytochrome P450"/>
    <property type="match status" value="1"/>
</dbReference>
<dbReference type="InterPro" id="IPR050529">
    <property type="entry name" value="CYP450_sterol_14alpha_dmase"/>
</dbReference>
<dbReference type="InterPro" id="IPR001128">
    <property type="entry name" value="Cyt_P450"/>
</dbReference>
<dbReference type="InterPro" id="IPR017972">
    <property type="entry name" value="Cyt_P450_CS"/>
</dbReference>
<dbReference type="InterPro" id="IPR002403">
    <property type="entry name" value="Cyt_P450_E_grp-IV"/>
</dbReference>
<dbReference type="InterPro" id="IPR036396">
    <property type="entry name" value="Cyt_P450_sf"/>
</dbReference>
<dbReference type="PANTHER" id="PTHR24304:SF2">
    <property type="entry name" value="24-HYDROXYCHOLESTEROL 7-ALPHA-HYDROXYLASE"/>
    <property type="match status" value="1"/>
</dbReference>
<dbReference type="PANTHER" id="PTHR24304">
    <property type="entry name" value="CYTOCHROME P450 FAMILY 7"/>
    <property type="match status" value="1"/>
</dbReference>
<dbReference type="Pfam" id="PF00067">
    <property type="entry name" value="p450"/>
    <property type="match status" value="1"/>
</dbReference>
<dbReference type="PRINTS" id="PR00465">
    <property type="entry name" value="EP450IV"/>
</dbReference>
<dbReference type="PRINTS" id="PR00385">
    <property type="entry name" value="P450"/>
</dbReference>
<dbReference type="SUPFAM" id="SSF48264">
    <property type="entry name" value="Cytochrome P450"/>
    <property type="match status" value="1"/>
</dbReference>
<dbReference type="PROSITE" id="PS00086">
    <property type="entry name" value="CYTOCHROME_P450"/>
    <property type="match status" value="1"/>
</dbReference>
<evidence type="ECO:0000250" key="1"/>
<evidence type="ECO:0000250" key="2">
    <source>
        <dbReference type="UniProtKB" id="P10613"/>
    </source>
</evidence>
<evidence type="ECO:0000250" key="3">
    <source>
        <dbReference type="UniProtKB" id="P10614"/>
    </source>
</evidence>
<evidence type="ECO:0000250" key="4">
    <source>
        <dbReference type="UniProtKB" id="Q4WNT5"/>
    </source>
</evidence>
<evidence type="ECO:0000255" key="5"/>
<evidence type="ECO:0000269" key="6">
    <source>
    </source>
</evidence>
<evidence type="ECO:0000269" key="7">
    <source>
    </source>
</evidence>
<evidence type="ECO:0000269" key="8">
    <source>
    </source>
</evidence>
<evidence type="ECO:0000269" key="9">
    <source>
    </source>
</evidence>
<evidence type="ECO:0000269" key="10">
    <source>
    </source>
</evidence>
<evidence type="ECO:0000269" key="11">
    <source>
    </source>
</evidence>
<evidence type="ECO:0000303" key="12">
    <source>
    </source>
</evidence>
<evidence type="ECO:0000305" key="13"/>
<evidence type="ECO:0000305" key="14">
    <source>
    </source>
</evidence>
<evidence type="ECO:0000305" key="15">
    <source>
    </source>
</evidence>
<evidence type="ECO:0000305" key="16">
    <source>
    </source>
</evidence>
<gene>
    <name evidence="12" type="primary">erg11</name>
    <name type="synonym">cyp51</name>
    <name type="ORF">SPAC13A11.02c</name>
</gene>
<feature type="chain" id="PRO_0000052009" description="Lanosterol 14-alpha demethylase erg11">
    <location>
        <begin position="1"/>
        <end position="495"/>
    </location>
</feature>
<feature type="transmembrane region" description="Helical" evidence="5">
    <location>
        <begin position="2"/>
        <end position="22"/>
    </location>
</feature>
<feature type="binding site" description="axial binding residue" evidence="1">
    <location>
        <position position="442"/>
    </location>
    <ligand>
        <name>heme</name>
        <dbReference type="ChEBI" id="CHEBI:30413"/>
    </ligand>
    <ligandPart>
        <name>Fe</name>
        <dbReference type="ChEBI" id="CHEBI:18248"/>
    </ligandPart>
</feature>
<feature type="mutagenesis site" description="In erg11-1: Impairs the production of ergosterol and leads to hydroxyurea hypersensitivity." evidence="9">
    <original>G</original>
    <variation>D</variation>
    <location>
        <position position="189"/>
    </location>
</feature>
<comment type="function">
    <text evidence="3 4 9 10 14 16">Sterol 14alpha-demethylase that plays a critical role in the third module of ergosterol biosynthesis pathway, being ergosterol the major sterol component in fungal membranes that participates in a variety of functions (Probable) (PubMed:27585850, PubMed:28893786). The third module or late pathway involves the ergosterol synthesis itself through consecutive reactions that mainly occur in the endoplasmic reticulum (ER) membrane (By similarity). In filamentous fungi, during the initial step of this module, lanosterol (lanosta-8,24-dien-3beta-ol) can be metabolized to eburicol (By similarity). Sterol 14alpha-demethylase catalyzes the three-step oxidative removal of the 14alpha-methyl group (C-32) of both these sterols in the form of formate, and converts eburicol and lanosterol to 14-demethyleburicol (4,4,24-trimethylergosta-8,14,24(28)-trienol) and 4,4-dimethyl-5alpha-cholesta-8,14,24-trien-3beta-ol, respectively, which are further metabolized by other enzymes in the pathway to ergosterol (Probable). Can also use substrates not intrinsic to fungi, such as 24,25-dihydrolanosterol (DHL), producing 4,4-dimethyl-8,14-cholestadien-3-beta-ol, but at lower rates than the endogenous substrates (By similarity).</text>
</comment>
<comment type="catalytic activity">
    <reaction evidence="15">
        <text>a 14alpha-methyl steroid + 3 reduced [NADPH--hemoprotein reductase] + 3 O2 = a Delta(14) steroid + formate + 3 oxidized [NADPH--hemoprotein reductase] + 4 H2O + 4 H(+)</text>
        <dbReference type="Rhea" id="RHEA:54028"/>
        <dbReference type="Rhea" id="RHEA-COMP:11964"/>
        <dbReference type="Rhea" id="RHEA-COMP:11965"/>
        <dbReference type="ChEBI" id="CHEBI:15377"/>
        <dbReference type="ChEBI" id="CHEBI:15378"/>
        <dbReference type="ChEBI" id="CHEBI:15379"/>
        <dbReference type="ChEBI" id="CHEBI:15740"/>
        <dbReference type="ChEBI" id="CHEBI:57618"/>
        <dbReference type="ChEBI" id="CHEBI:58210"/>
        <dbReference type="ChEBI" id="CHEBI:138029"/>
        <dbReference type="ChEBI" id="CHEBI:138031"/>
        <dbReference type="EC" id="1.14.14.154"/>
    </reaction>
    <physiologicalReaction direction="left-to-right" evidence="15">
        <dbReference type="Rhea" id="RHEA:54029"/>
    </physiologicalReaction>
</comment>
<comment type="catalytic activity">
    <reaction evidence="3">
        <text>a 14alpha-methyl steroid + reduced [NADPH--hemoprotein reductase] + O2 = a 14alpha-hydroxymethyl steroid + oxidized [NADPH--hemoprotein reductase] + H2O + H(+)</text>
        <dbReference type="Rhea" id="RHEA:68060"/>
        <dbReference type="Rhea" id="RHEA-COMP:11964"/>
        <dbReference type="Rhea" id="RHEA-COMP:11965"/>
        <dbReference type="ChEBI" id="CHEBI:15377"/>
        <dbReference type="ChEBI" id="CHEBI:15378"/>
        <dbReference type="ChEBI" id="CHEBI:15379"/>
        <dbReference type="ChEBI" id="CHEBI:57618"/>
        <dbReference type="ChEBI" id="CHEBI:58210"/>
        <dbReference type="ChEBI" id="CHEBI:138029"/>
        <dbReference type="ChEBI" id="CHEBI:176901"/>
    </reaction>
    <physiologicalReaction direction="left-to-right" evidence="3">
        <dbReference type="Rhea" id="RHEA:68061"/>
    </physiologicalReaction>
</comment>
<comment type="catalytic activity">
    <reaction evidence="3">
        <text>a 14alpha-hydroxymethyl steroid + reduced [NADPH--hemoprotein reductase] + O2 = a 14alpha-formyl steroid + oxidized [NADPH--hemoprotein reductase] + 2 H2O + H(+)</text>
        <dbReference type="Rhea" id="RHEA:68064"/>
        <dbReference type="Rhea" id="RHEA-COMP:11964"/>
        <dbReference type="Rhea" id="RHEA-COMP:11965"/>
        <dbReference type="ChEBI" id="CHEBI:15377"/>
        <dbReference type="ChEBI" id="CHEBI:15378"/>
        <dbReference type="ChEBI" id="CHEBI:15379"/>
        <dbReference type="ChEBI" id="CHEBI:57618"/>
        <dbReference type="ChEBI" id="CHEBI:58210"/>
        <dbReference type="ChEBI" id="CHEBI:176901"/>
        <dbReference type="ChEBI" id="CHEBI:176902"/>
    </reaction>
    <physiologicalReaction direction="left-to-right" evidence="3">
        <dbReference type="Rhea" id="RHEA:68065"/>
    </physiologicalReaction>
</comment>
<comment type="catalytic activity">
    <reaction evidence="3">
        <text>a 14alpha-formyl steroid + reduced [NADPH--hemoprotein reductase] + O2 = a Delta(14) steroid + formate + oxidized [NADPH--hemoprotein reductase] + H2O + 2 H(+)</text>
        <dbReference type="Rhea" id="RHEA:68068"/>
        <dbReference type="Rhea" id="RHEA-COMP:11964"/>
        <dbReference type="Rhea" id="RHEA-COMP:11965"/>
        <dbReference type="ChEBI" id="CHEBI:15377"/>
        <dbReference type="ChEBI" id="CHEBI:15378"/>
        <dbReference type="ChEBI" id="CHEBI:15379"/>
        <dbReference type="ChEBI" id="CHEBI:15740"/>
        <dbReference type="ChEBI" id="CHEBI:57618"/>
        <dbReference type="ChEBI" id="CHEBI:58210"/>
        <dbReference type="ChEBI" id="CHEBI:138031"/>
        <dbReference type="ChEBI" id="CHEBI:176902"/>
    </reaction>
    <physiologicalReaction direction="left-to-right" evidence="3">
        <dbReference type="Rhea" id="RHEA:68069"/>
    </physiologicalReaction>
</comment>
<comment type="catalytic activity">
    <reaction evidence="3">
        <text>lanosterol + 3 reduced [NADPH--hemoprotein reductase] + 3 O2 = 4,4-dimethyl-5alpha-cholesta-8,14,24-trien-3beta-ol + formate + 3 oxidized [NADPH--hemoprotein reductase] + 4 H2O + 4 H(+)</text>
        <dbReference type="Rhea" id="RHEA:25286"/>
        <dbReference type="Rhea" id="RHEA-COMP:11964"/>
        <dbReference type="Rhea" id="RHEA-COMP:11965"/>
        <dbReference type="ChEBI" id="CHEBI:15377"/>
        <dbReference type="ChEBI" id="CHEBI:15378"/>
        <dbReference type="ChEBI" id="CHEBI:15379"/>
        <dbReference type="ChEBI" id="CHEBI:15740"/>
        <dbReference type="ChEBI" id="CHEBI:16521"/>
        <dbReference type="ChEBI" id="CHEBI:17813"/>
        <dbReference type="ChEBI" id="CHEBI:57618"/>
        <dbReference type="ChEBI" id="CHEBI:58210"/>
        <dbReference type="EC" id="1.14.14.154"/>
    </reaction>
    <physiologicalReaction direction="left-to-right" evidence="3">
        <dbReference type="Rhea" id="RHEA:25287"/>
    </physiologicalReaction>
</comment>
<comment type="catalytic activity">
    <reaction evidence="3">
        <text>lanosterol + reduced [NADPH--hemoprotein reductase] + O2 = 32-hydroxylanosterol + oxidized [NADPH--hemoprotein reductase] + H2O + H(+)</text>
        <dbReference type="Rhea" id="RHEA:75103"/>
        <dbReference type="Rhea" id="RHEA-COMP:11964"/>
        <dbReference type="Rhea" id="RHEA-COMP:11965"/>
        <dbReference type="ChEBI" id="CHEBI:15377"/>
        <dbReference type="ChEBI" id="CHEBI:15378"/>
        <dbReference type="ChEBI" id="CHEBI:15379"/>
        <dbReference type="ChEBI" id="CHEBI:16521"/>
        <dbReference type="ChEBI" id="CHEBI:57618"/>
        <dbReference type="ChEBI" id="CHEBI:58210"/>
        <dbReference type="ChEBI" id="CHEBI:166806"/>
    </reaction>
    <physiologicalReaction direction="left-to-right" evidence="3">
        <dbReference type="Rhea" id="RHEA:75104"/>
    </physiologicalReaction>
</comment>
<comment type="catalytic activity">
    <reaction evidence="3">
        <text>32-hydroxylanosterol + reduced [NADPH--hemoprotein reductase] + O2 = 32-oxolanosterol + oxidized [NADPH--hemoprotein reductase] + 2 H2O + H(+)</text>
        <dbReference type="Rhea" id="RHEA:75107"/>
        <dbReference type="Rhea" id="RHEA-COMP:11964"/>
        <dbReference type="Rhea" id="RHEA-COMP:11965"/>
        <dbReference type="ChEBI" id="CHEBI:15377"/>
        <dbReference type="ChEBI" id="CHEBI:15378"/>
        <dbReference type="ChEBI" id="CHEBI:15379"/>
        <dbReference type="ChEBI" id="CHEBI:57618"/>
        <dbReference type="ChEBI" id="CHEBI:58210"/>
        <dbReference type="ChEBI" id="CHEBI:166681"/>
        <dbReference type="ChEBI" id="CHEBI:166806"/>
    </reaction>
    <physiologicalReaction direction="left-to-right" evidence="3">
        <dbReference type="Rhea" id="RHEA:75108"/>
    </physiologicalReaction>
</comment>
<comment type="catalytic activity">
    <reaction evidence="3">
        <text>32-oxolanosterol + reduced [NADPH--hemoprotein reductase] + O2 = 4,4-dimethyl-5alpha-cholesta-8,14,24-trien-3beta-ol + formate + oxidized [NADPH--hemoprotein reductase] + H2O + 2 H(+)</text>
        <dbReference type="Rhea" id="RHEA:75111"/>
        <dbReference type="Rhea" id="RHEA-COMP:11964"/>
        <dbReference type="Rhea" id="RHEA-COMP:11965"/>
        <dbReference type="ChEBI" id="CHEBI:15377"/>
        <dbReference type="ChEBI" id="CHEBI:15378"/>
        <dbReference type="ChEBI" id="CHEBI:15379"/>
        <dbReference type="ChEBI" id="CHEBI:15740"/>
        <dbReference type="ChEBI" id="CHEBI:17813"/>
        <dbReference type="ChEBI" id="CHEBI:57618"/>
        <dbReference type="ChEBI" id="CHEBI:58210"/>
        <dbReference type="ChEBI" id="CHEBI:166681"/>
    </reaction>
    <physiologicalReaction direction="left-to-right" evidence="3">
        <dbReference type="Rhea" id="RHEA:75112"/>
    </physiologicalReaction>
</comment>
<comment type="catalytic activity">
    <reaction evidence="2">
        <text>eburicol + 3 reduced [NADPH--hemoprotein reductase] + 3 O2 = 14-demethyleburicol + formate + 3 oxidized [NADPH--hemoprotein reductase] + 4 H2O + 4 H(+)</text>
        <dbReference type="Rhea" id="RHEA:75439"/>
        <dbReference type="Rhea" id="RHEA-COMP:11964"/>
        <dbReference type="Rhea" id="RHEA-COMP:11965"/>
        <dbReference type="ChEBI" id="CHEBI:15377"/>
        <dbReference type="ChEBI" id="CHEBI:15378"/>
        <dbReference type="ChEBI" id="CHEBI:15379"/>
        <dbReference type="ChEBI" id="CHEBI:15740"/>
        <dbReference type="ChEBI" id="CHEBI:57618"/>
        <dbReference type="ChEBI" id="CHEBI:58210"/>
        <dbReference type="ChEBI" id="CHEBI:70315"/>
        <dbReference type="ChEBI" id="CHEBI:194330"/>
    </reaction>
    <physiologicalReaction direction="left-to-right" evidence="2">
        <dbReference type="Rhea" id="RHEA:75440"/>
    </physiologicalReaction>
</comment>
<comment type="catalytic activity">
    <reaction evidence="3">
        <text>eburicol + reduced [NADPH--hemoprotein reductase] + O2 = 32-hydroxyeburicol + oxidized [NADPH--hemoprotein reductase] + H2O + H(+)</text>
        <dbReference type="Rhea" id="RHEA:75427"/>
        <dbReference type="Rhea" id="RHEA-COMP:11964"/>
        <dbReference type="Rhea" id="RHEA-COMP:11965"/>
        <dbReference type="ChEBI" id="CHEBI:15377"/>
        <dbReference type="ChEBI" id="CHEBI:15378"/>
        <dbReference type="ChEBI" id="CHEBI:15379"/>
        <dbReference type="ChEBI" id="CHEBI:57618"/>
        <dbReference type="ChEBI" id="CHEBI:58210"/>
        <dbReference type="ChEBI" id="CHEBI:70315"/>
        <dbReference type="ChEBI" id="CHEBI:194328"/>
    </reaction>
    <physiologicalReaction direction="left-to-right" evidence="3">
        <dbReference type="Rhea" id="RHEA:75428"/>
    </physiologicalReaction>
</comment>
<comment type="catalytic activity">
    <reaction evidence="3">
        <text>32-hydroxyeburicol + reduced [NADPH--hemoprotein reductase] + O2 = 32-oxoeburicol + oxidized [NADPH--hemoprotein reductase] + 2 H2O + H(+)</text>
        <dbReference type="Rhea" id="RHEA:75431"/>
        <dbReference type="Rhea" id="RHEA-COMP:11964"/>
        <dbReference type="Rhea" id="RHEA-COMP:11965"/>
        <dbReference type="ChEBI" id="CHEBI:15377"/>
        <dbReference type="ChEBI" id="CHEBI:15378"/>
        <dbReference type="ChEBI" id="CHEBI:15379"/>
        <dbReference type="ChEBI" id="CHEBI:57618"/>
        <dbReference type="ChEBI" id="CHEBI:58210"/>
        <dbReference type="ChEBI" id="CHEBI:194328"/>
        <dbReference type="ChEBI" id="CHEBI:194329"/>
    </reaction>
    <physiologicalReaction direction="left-to-right" evidence="3">
        <dbReference type="Rhea" id="RHEA:75432"/>
    </physiologicalReaction>
</comment>
<comment type="catalytic activity">
    <reaction evidence="3">
        <text>32-oxoeburicol + reduced [NADPH--hemoprotein reductase] + O2 = 14-demethyleburicol + formate + oxidized [NADPH--hemoprotein reductase] + H2O + 2 H(+)</text>
        <dbReference type="Rhea" id="RHEA:75435"/>
        <dbReference type="Rhea" id="RHEA-COMP:11964"/>
        <dbReference type="Rhea" id="RHEA-COMP:11965"/>
        <dbReference type="ChEBI" id="CHEBI:15377"/>
        <dbReference type="ChEBI" id="CHEBI:15378"/>
        <dbReference type="ChEBI" id="CHEBI:15379"/>
        <dbReference type="ChEBI" id="CHEBI:15740"/>
        <dbReference type="ChEBI" id="CHEBI:57618"/>
        <dbReference type="ChEBI" id="CHEBI:58210"/>
        <dbReference type="ChEBI" id="CHEBI:194329"/>
        <dbReference type="ChEBI" id="CHEBI:194330"/>
    </reaction>
    <physiologicalReaction direction="left-to-right" evidence="3">
        <dbReference type="Rhea" id="RHEA:75436"/>
    </physiologicalReaction>
</comment>
<comment type="cofactor">
    <cofactor evidence="3">
        <name>heme</name>
        <dbReference type="ChEBI" id="CHEBI:30413"/>
    </cofactor>
</comment>
<comment type="pathway">
    <text evidence="9">Steroid biosynthesis; zymosterol biosynthesis; zymosterol from lanosterol: step 1/6.</text>
</comment>
<comment type="pathway">
    <text evidence="9">Steroid metabolism; ergosterol biosynthesis.</text>
</comment>
<comment type="subunit">
    <text evidence="8">Interacts with dap1.</text>
</comment>
<comment type="subcellular location">
    <subcellularLocation>
        <location evidence="7">Endoplasmic reticulum</location>
    </subcellularLocation>
    <subcellularLocation>
        <location evidence="13">Membrane</location>
        <topology evidence="13">Single-pass membrane protein</topology>
    </subcellularLocation>
</comment>
<comment type="induction">
    <text evidence="6">Expression is anaerobically up-regulated via the sterol regulatory element binding protein sre1.</text>
</comment>
<comment type="miscellaneous">
    <text evidence="11">In Aspergillus, the biosynthesis pathway of the sterol precursors leading to the prevalent sterol ergosterol differs from yeast. The ringsystem of lanosterol in S.cerevisiae is firstly demethylised in three enzymatic steps leading to the intermediate zymosterol and secondly a methyl group is added to zymosterol by the sterol 24-C-methyltransferase to form fecosterol. In Aspergillus, lanosterol is firstly transmethylated by the sterol 24-C-methyltransferase leading to the intermediate eburicol and secondly demethylated in three steps to form fecosterol. In the genus Schizosaccharomyces, 2 routes exist from lanosterol to erposterol: the classical one via zymosterol and the second one via the formation of eburicol followed by demethylation.</text>
</comment>
<comment type="similarity">
    <text evidence="13">Belongs to the cytochrome P450 family.</text>
</comment>
<reference key="1">
    <citation type="journal article" date="2002" name="Nature">
        <title>The genome sequence of Schizosaccharomyces pombe.</title>
        <authorList>
            <person name="Wood V."/>
            <person name="Gwilliam R."/>
            <person name="Rajandream M.A."/>
            <person name="Lyne M.H."/>
            <person name="Lyne R."/>
            <person name="Stewart A."/>
            <person name="Sgouros J.G."/>
            <person name="Peat N."/>
            <person name="Hayles J."/>
            <person name="Baker S.G."/>
            <person name="Basham D."/>
            <person name="Bowman S."/>
            <person name="Brooks K."/>
            <person name="Brown D."/>
            <person name="Brown S."/>
            <person name="Chillingworth T."/>
            <person name="Churcher C.M."/>
            <person name="Collins M."/>
            <person name="Connor R."/>
            <person name="Cronin A."/>
            <person name="Davis P."/>
            <person name="Feltwell T."/>
            <person name="Fraser A."/>
            <person name="Gentles S."/>
            <person name="Goble A."/>
            <person name="Hamlin N."/>
            <person name="Harris D.E."/>
            <person name="Hidalgo J."/>
            <person name="Hodgson G."/>
            <person name="Holroyd S."/>
            <person name="Hornsby T."/>
            <person name="Howarth S."/>
            <person name="Huckle E.J."/>
            <person name="Hunt S."/>
            <person name="Jagels K."/>
            <person name="James K.D."/>
            <person name="Jones L."/>
            <person name="Jones M."/>
            <person name="Leather S."/>
            <person name="McDonald S."/>
            <person name="McLean J."/>
            <person name="Mooney P."/>
            <person name="Moule S."/>
            <person name="Mungall K.L."/>
            <person name="Murphy L.D."/>
            <person name="Niblett D."/>
            <person name="Odell C."/>
            <person name="Oliver K."/>
            <person name="O'Neil S."/>
            <person name="Pearson D."/>
            <person name="Quail M.A."/>
            <person name="Rabbinowitsch E."/>
            <person name="Rutherford K.M."/>
            <person name="Rutter S."/>
            <person name="Saunders D."/>
            <person name="Seeger K."/>
            <person name="Sharp S."/>
            <person name="Skelton J."/>
            <person name="Simmonds M.N."/>
            <person name="Squares R."/>
            <person name="Squares S."/>
            <person name="Stevens K."/>
            <person name="Taylor K."/>
            <person name="Taylor R.G."/>
            <person name="Tivey A."/>
            <person name="Walsh S.V."/>
            <person name="Warren T."/>
            <person name="Whitehead S."/>
            <person name="Woodward J.R."/>
            <person name="Volckaert G."/>
            <person name="Aert R."/>
            <person name="Robben J."/>
            <person name="Grymonprez B."/>
            <person name="Weltjens I."/>
            <person name="Vanstreels E."/>
            <person name="Rieger M."/>
            <person name="Schaefer M."/>
            <person name="Mueller-Auer S."/>
            <person name="Gabel C."/>
            <person name="Fuchs M."/>
            <person name="Duesterhoeft A."/>
            <person name="Fritzc C."/>
            <person name="Holzer E."/>
            <person name="Moestl D."/>
            <person name="Hilbert H."/>
            <person name="Borzym K."/>
            <person name="Langer I."/>
            <person name="Beck A."/>
            <person name="Lehrach H."/>
            <person name="Reinhardt R."/>
            <person name="Pohl T.M."/>
            <person name="Eger P."/>
            <person name="Zimmermann W."/>
            <person name="Wedler H."/>
            <person name="Wambutt R."/>
            <person name="Purnelle B."/>
            <person name="Goffeau A."/>
            <person name="Cadieu E."/>
            <person name="Dreano S."/>
            <person name="Gloux S."/>
            <person name="Lelaure V."/>
            <person name="Mottier S."/>
            <person name="Galibert F."/>
            <person name="Aves S.J."/>
            <person name="Xiang Z."/>
            <person name="Hunt C."/>
            <person name="Moore K."/>
            <person name="Hurst S.M."/>
            <person name="Lucas M."/>
            <person name="Rochet M."/>
            <person name="Gaillardin C."/>
            <person name="Tallada V.A."/>
            <person name="Garzon A."/>
            <person name="Thode G."/>
            <person name="Daga R.R."/>
            <person name="Cruzado L."/>
            <person name="Jimenez J."/>
            <person name="Sanchez M."/>
            <person name="del Rey F."/>
            <person name="Benito J."/>
            <person name="Dominguez A."/>
            <person name="Revuelta J.L."/>
            <person name="Moreno S."/>
            <person name="Armstrong J."/>
            <person name="Forsburg S.L."/>
            <person name="Cerutti L."/>
            <person name="Lowe T."/>
            <person name="McCombie W.R."/>
            <person name="Paulsen I."/>
            <person name="Potashkin J."/>
            <person name="Shpakovski G.V."/>
            <person name="Ussery D."/>
            <person name="Barrell B.G."/>
            <person name="Nurse P."/>
        </authorList>
    </citation>
    <scope>NUCLEOTIDE SEQUENCE [LARGE SCALE GENOMIC DNA]</scope>
    <source>
        <strain>972 / ATCC 24843</strain>
    </source>
</reference>
<reference key="2">
    <citation type="journal article" date="1995" name="FEMS Microbiol. Lett.">
        <title>Identification of 24-methylene-24,25-dihydrolanosterol as a precursor of ergosterol in the yeasts Schizosaccharomyces pombe and Schizosaccharomyces octosporus.</title>
        <authorList>
            <person name="Harmouch N."/>
            <person name="Coulon J."/>
            <person name="Bonaly R."/>
        </authorList>
    </citation>
    <scope>FUNCTION</scope>
</reference>
<reference key="3">
    <citation type="journal article" date="2006" name="Mol. Cell. Biol.">
        <title>Sterol regulatory element binding protein is a principal regulator of anaerobic gene expression in fission yeast.</title>
        <authorList>
            <person name="Todd B.L."/>
            <person name="Stewart E.V."/>
            <person name="Burg J.S."/>
            <person name="Hughes A.L."/>
            <person name="Espenshade P.J."/>
        </authorList>
    </citation>
    <scope>IDENTIFICATION</scope>
    <scope>INDUCTION</scope>
</reference>
<reference key="4">
    <citation type="journal article" date="2006" name="Nat. Biotechnol.">
        <title>ORFeome cloning and global analysis of protein localization in the fission yeast Schizosaccharomyces pombe.</title>
        <authorList>
            <person name="Matsuyama A."/>
            <person name="Arai R."/>
            <person name="Yashiroda Y."/>
            <person name="Shirai A."/>
            <person name="Kamata A."/>
            <person name="Sekido S."/>
            <person name="Kobayashi Y."/>
            <person name="Hashimoto A."/>
            <person name="Hamamoto M."/>
            <person name="Hiraoka Y."/>
            <person name="Horinouchi S."/>
            <person name="Yoshida M."/>
        </authorList>
    </citation>
    <scope>SUBCELLULAR LOCATION [LARGE SCALE ANALYSIS]</scope>
</reference>
<reference key="5">
    <citation type="journal article" date="2007" name="Cell Metab.">
        <title>Dap1/PGRMC1 binds and regulates cytochrome P450 enzymes.</title>
        <authorList>
            <person name="Hughes A.L."/>
            <person name="Powell D.W."/>
            <person name="Bard M."/>
            <person name="Eckstein J."/>
            <person name="Barbuch R."/>
            <person name="Link A.J."/>
            <person name="Espenshade P.J."/>
        </authorList>
    </citation>
    <scope>IDENTIFICATION BY MASS SPECTROMETRY</scope>
    <scope>INTERACTION WITH DAP1</scope>
</reference>
<reference key="6">
    <citation type="journal article" date="2008" name="Microbiology">
        <title>Multiple functions of ergosterol in the fission yeast Schizosaccharomyces pombe.</title>
        <authorList>
            <person name="Iwaki T."/>
            <person name="Iefuji H."/>
            <person name="Hiraga Y."/>
            <person name="Hosomi A."/>
            <person name="Morita T."/>
            <person name="Giga-Hama Y."/>
            <person name="Takegawa K."/>
        </authorList>
    </citation>
    <scope>FUNCTION</scope>
</reference>
<reference key="7">
    <citation type="journal article" date="2016" name="Genetics">
        <title>Hydroxyurea induces cytokinesis arrest in cells expressing a mutated sterol-14alpha-demethylase in the egosterol biosynthesis pathway.</title>
        <authorList>
            <person name="Xu Y.J."/>
            <person name="Singh A."/>
            <person name="Alter G.M."/>
        </authorList>
    </citation>
    <scope>FUNCTION</scope>
    <scope>MUTAGENESIS OF GLY-189</scope>
    <scope>PATHWAY</scope>
</reference>
<reference key="8">
    <citation type="journal article" date="2017" name="Antimicrob. Agents Chemother.">
        <title>Novel cell-killing mechanisms of hydroxyurea and the implication toward combination therapy for the treatment of fungal infections.</title>
        <authorList>
            <person name="Singh A."/>
            <person name="Agarwal A."/>
            <person name="Xu Y.J."/>
        </authorList>
    </citation>
    <scope>FUNCTION</scope>
</reference>
<name>CP51_SCHPO</name>
<sequence length="495" mass="56331">MAFSLVSILLSIALAWYVGYIINQLTSRNSKRPPIVFHWIPFVGSAVAYGMDPYVFFRECRAKYGDVFTFVCMGRKMTAFLGVQGNDFLFNGKLADLNAEEAYSHLTTPVFGKDVVYDIPNHVFMEHKKFIKSGLGFSQFRSYVPLILNEMDAFLSTSPDFGPGKEGVADLLKTMPVMTIYTASRTLQGAEVRKGFDAGFADLYHDLDQGFSPVNFVFPWLPLPRNRRRDRAHKIMQKTYLKIIKDRRSSTENPGTDMIWTLMSCKYRDGRPLKEHEIAGMMIALLMAGQHTSAATIVWVLALLGSKPEIIEMLWEEQKRVVGENLELKFDQYKDMPLLNYVIQETLRLHPPIHSHMRKVKRDLPVPGSKIVIPANNYLLAAPGLTATEEEYFTHATDFDPKRWNDRVNEDENAEQIDYGYGLVTKGAASPYLPFGAGRHRCIGEQFAYMHLSTIISKFVHDYTWTLIGKVPNVDYSSMVALPLGPVKIAWKRRN</sequence>
<proteinExistence type="evidence at protein level"/>